<protein>
    <recommendedName>
        <fullName>Adenylate cyclase</fullName>
        <ecNumber>4.6.1.1</ecNumber>
    </recommendedName>
    <alternativeName>
        <fullName>ATP pyrophosphate-lyase</fullName>
    </alternativeName>
    <alternativeName>
        <fullName>Adenylyl cyclase</fullName>
    </alternativeName>
</protein>
<accession>Q59685</accession>
<comment type="catalytic activity">
    <reaction>
        <text>ATP = 3',5'-cyclic AMP + diphosphate</text>
        <dbReference type="Rhea" id="RHEA:15389"/>
        <dbReference type="ChEBI" id="CHEBI:30616"/>
        <dbReference type="ChEBI" id="CHEBI:33019"/>
        <dbReference type="ChEBI" id="CHEBI:58165"/>
        <dbReference type="EC" id="4.6.1.1"/>
    </reaction>
</comment>
<comment type="subcellular location">
    <subcellularLocation>
        <location>Cytoplasm</location>
    </subcellularLocation>
</comment>
<comment type="similarity">
    <text evidence="2">Belongs to the adenylyl cyclase class-1 family.</text>
</comment>
<dbReference type="EC" id="4.6.1.1"/>
<dbReference type="EMBL" id="U22969">
    <property type="protein sequence ID" value="AAC44330.1"/>
    <property type="molecule type" value="Genomic_DNA"/>
</dbReference>
<dbReference type="RefSeq" id="WP_004246330.1">
    <property type="nucleotide sequence ID" value="NZ_WEKK01000020.1"/>
</dbReference>
<dbReference type="STRING" id="584.AOUC001_17900"/>
<dbReference type="PATRIC" id="fig|584.120.peg.92"/>
<dbReference type="OMA" id="YDDYVMS"/>
<dbReference type="OrthoDB" id="5571448at2"/>
<dbReference type="GO" id="GO:0005737">
    <property type="term" value="C:cytoplasm"/>
    <property type="evidence" value="ECO:0007669"/>
    <property type="project" value="UniProtKB-SubCell"/>
</dbReference>
<dbReference type="GO" id="GO:0004016">
    <property type="term" value="F:adenylate cyclase activity"/>
    <property type="evidence" value="ECO:0007669"/>
    <property type="project" value="UniProtKB-EC"/>
</dbReference>
<dbReference type="GO" id="GO:0005524">
    <property type="term" value="F:ATP binding"/>
    <property type="evidence" value="ECO:0007669"/>
    <property type="project" value="UniProtKB-KW"/>
</dbReference>
<dbReference type="GO" id="GO:0006171">
    <property type="term" value="P:cAMP biosynthetic process"/>
    <property type="evidence" value="ECO:0007669"/>
    <property type="project" value="UniProtKB-KW"/>
</dbReference>
<dbReference type="InterPro" id="IPR000274">
    <property type="entry name" value="Adenylate_cyclase_1"/>
</dbReference>
<dbReference type="InterPro" id="IPR024686">
    <property type="entry name" value="Adenylate_cyclase_1_CS"/>
</dbReference>
<dbReference type="InterPro" id="IPR024685">
    <property type="entry name" value="Adenylate_cyclase_1_N"/>
</dbReference>
<dbReference type="NCBIfam" id="NF006978">
    <property type="entry name" value="PRK09450.1-2"/>
    <property type="match status" value="1"/>
</dbReference>
<dbReference type="NCBIfam" id="NF006979">
    <property type="entry name" value="PRK09450.1-4"/>
    <property type="match status" value="1"/>
</dbReference>
<dbReference type="PANTHER" id="PTHR38760">
    <property type="entry name" value="ADENYLATE CYCLASE"/>
    <property type="match status" value="1"/>
</dbReference>
<dbReference type="PANTHER" id="PTHR38760:SF1">
    <property type="entry name" value="ADENYLATE CYCLASE"/>
    <property type="match status" value="1"/>
</dbReference>
<dbReference type="Pfam" id="PF12633">
    <property type="entry name" value="Adenyl_cycl_N"/>
    <property type="match status" value="1"/>
</dbReference>
<dbReference type="Pfam" id="PF01295">
    <property type="entry name" value="Adenylate_cycl"/>
    <property type="match status" value="1"/>
</dbReference>
<dbReference type="PIRSF" id="PIRSF001444">
    <property type="entry name" value="Adenylate_cycl"/>
    <property type="match status" value="1"/>
</dbReference>
<dbReference type="PROSITE" id="PS01092">
    <property type="entry name" value="ADENYLATE_CYCLASE_1_1"/>
    <property type="match status" value="1"/>
</dbReference>
<dbReference type="PROSITE" id="PS01093">
    <property type="entry name" value="ADENYLATE_CYCLASE_1_2"/>
    <property type="match status" value="1"/>
</dbReference>
<sequence>MYLYIETLKQRLDAINQLRLERAFASMSDVFKQVYGLIPVLLHYHHPQLPGYIQGNVPHGTCFFEPDDVQRQWVNKLTNASCDEPMNGYTSGELPITGIYSMGSTSSIGQSHCSDIDIWVCHQSWLDQDERARLQRKCLLIEQWAGELGIDVTFFLIDENRFRHHASGSLGGEDCGSTQHILLLDEFYRTAVRLAGKRLLWTMVPVEEEYHYDEYVNSLYAQGVLTPNEWLDLGGLGELSAEEYFGASLWQLYKSVDSPYKAVLKSILLEAYSADYPNGKLLALEMKQHLHRGEIVNYGLDAYCMMLERVTRYLVSINDLTRLDLIRRCFYLKVCEKLSNEKNENEPAGWRRQVLSQLVTQWQWDHERLAILDNRDSWKIERVRNAHNELLDTMMQSYRNLIRFARRNNLSVSASPQDIGVLTRKLYAAFEALPGKVTLVNPQISPDLSEPHLTFIYVPPGRANRSGWYLYNRAPDFAHIVGHQPLEYNRYLNKLVAWSYFNGLLTKDSQVYIHQGDSSCDEIKLHELVRDISSHFPIRLPAPTPKALYSPCEIRHLAIIVNLEVDPTERFSDQVVHFDFRKLDVFSFGEEEQCLIGSIDLLYRNSWNEVRTLHFNGTQSMLESLKTILGKMHQDAAPPASVEVFCYSQHLRGLIRTRVQQLVSECIELRLSTNRLEPGRFKALRIAGQTWGLFFERLNVSVQKLENAIEFYGAISYNKLHGLPVKLGKDARYLPAVIDGFACEGIIQFFFETTEDNNVFNIYILDEANRVEIYSHCEGSKEELVKDVSRFYSSSHDRFTYGSSFINFNLPQFYQIVKVDGATQVLPFAGGSFGKLSDLGKTAPKEEMSTKPIQGFNDYQAVHHH</sequence>
<evidence type="ECO:0000255" key="1"/>
<evidence type="ECO:0000305" key="2"/>
<keyword id="KW-0067">ATP-binding</keyword>
<keyword id="KW-0115">cAMP biosynthesis</keyword>
<keyword id="KW-0963">Cytoplasm</keyword>
<keyword id="KW-0456">Lyase</keyword>
<keyword id="KW-0547">Nucleotide-binding</keyword>
<gene>
    <name type="primary">cya</name>
</gene>
<name>CYAA_PROMI</name>
<feature type="chain" id="PRO_0000195678" description="Adenylate cyclase">
    <location>
        <begin position="1"/>
        <end position="865"/>
    </location>
</feature>
<feature type="region of interest" description="Catalytic" evidence="1">
    <location>
        <begin position="1"/>
        <end position="540"/>
    </location>
</feature>
<feature type="region of interest" description="Regulatory" evidence="1">
    <location>
        <begin position="546"/>
        <end position="865"/>
    </location>
</feature>
<proteinExistence type="inferred from homology"/>
<reference key="1">
    <citation type="journal article" date="1996" name="Biochimie">
        <title>Comparative analysis of the cya locus in enterobacteria and related Gram-negative facultative anaerobes.</title>
        <authorList>
            <person name="Trotot P."/>
            <person name="Sismeiro O."/>
            <person name="Vivares C."/>
            <person name="Glaser P."/>
            <person name="Bresson-Roy A."/>
            <person name="Danchin A."/>
        </authorList>
    </citation>
    <scope>NUCLEOTIDE SEQUENCE [GENOMIC DNA]</scope>
</reference>
<organism>
    <name type="scientific">Proteus mirabilis</name>
    <dbReference type="NCBI Taxonomy" id="584"/>
    <lineage>
        <taxon>Bacteria</taxon>
        <taxon>Pseudomonadati</taxon>
        <taxon>Pseudomonadota</taxon>
        <taxon>Gammaproteobacteria</taxon>
        <taxon>Enterobacterales</taxon>
        <taxon>Morganellaceae</taxon>
        <taxon>Proteus</taxon>
    </lineage>
</organism>